<comment type="function">
    <text evidence="1">Channel that opens in response to stretch forces in the membrane lipid bilayer. May participate in the regulation of osmotic pressure changes within the cell.</text>
</comment>
<comment type="subunit">
    <text evidence="1">Homopentamer.</text>
</comment>
<comment type="subcellular location">
    <subcellularLocation>
        <location evidence="1">Cell inner membrane</location>
        <topology evidence="1">Multi-pass membrane protein</topology>
    </subcellularLocation>
</comment>
<comment type="similarity">
    <text evidence="1">Belongs to the MscL family.</text>
</comment>
<reference key="1">
    <citation type="journal article" date="2010" name="Genome Biol. Evol.">
        <title>Continuing evolution of Burkholderia mallei through genome reduction and large-scale rearrangements.</title>
        <authorList>
            <person name="Losada L."/>
            <person name="Ronning C.M."/>
            <person name="DeShazer D."/>
            <person name="Woods D."/>
            <person name="Fedorova N."/>
            <person name="Kim H.S."/>
            <person name="Shabalina S.A."/>
            <person name="Pearson T.R."/>
            <person name="Brinkac L."/>
            <person name="Tan P."/>
            <person name="Nandi T."/>
            <person name="Crabtree J."/>
            <person name="Badger J."/>
            <person name="Beckstrom-Sternberg S."/>
            <person name="Saqib M."/>
            <person name="Schutzer S.E."/>
            <person name="Keim P."/>
            <person name="Nierman W.C."/>
        </authorList>
    </citation>
    <scope>NUCLEOTIDE SEQUENCE [LARGE SCALE GENOMIC DNA]</scope>
    <source>
        <strain>SAVP1</strain>
    </source>
</reference>
<gene>
    <name evidence="1" type="primary">mscL</name>
    <name type="ordered locus">BMASAVP1_A2000</name>
</gene>
<evidence type="ECO:0000255" key="1">
    <source>
        <dbReference type="HAMAP-Rule" id="MF_00115"/>
    </source>
</evidence>
<proteinExistence type="inferred from homology"/>
<feature type="chain" id="PRO_1000015362" description="Large-conductance mechanosensitive channel">
    <location>
        <begin position="1"/>
        <end position="143"/>
    </location>
</feature>
<feature type="transmembrane region" description="Helical" evidence="1">
    <location>
        <begin position="10"/>
        <end position="30"/>
    </location>
</feature>
<feature type="transmembrane region" description="Helical" evidence="1">
    <location>
        <begin position="89"/>
        <end position="109"/>
    </location>
</feature>
<dbReference type="EMBL" id="CP000526">
    <property type="protein sequence ID" value="ABM50677.1"/>
    <property type="molecule type" value="Genomic_DNA"/>
</dbReference>
<dbReference type="RefSeq" id="WP_004192898.1">
    <property type="nucleotide sequence ID" value="NC_008785.1"/>
</dbReference>
<dbReference type="SMR" id="A1V513"/>
<dbReference type="GeneID" id="93060637"/>
<dbReference type="KEGG" id="bmv:BMASAVP1_A2000"/>
<dbReference type="HOGENOM" id="CLU_095787_0_1_4"/>
<dbReference type="GO" id="GO:0005886">
    <property type="term" value="C:plasma membrane"/>
    <property type="evidence" value="ECO:0007669"/>
    <property type="project" value="UniProtKB-SubCell"/>
</dbReference>
<dbReference type="GO" id="GO:0008381">
    <property type="term" value="F:mechanosensitive monoatomic ion channel activity"/>
    <property type="evidence" value="ECO:0007669"/>
    <property type="project" value="UniProtKB-UniRule"/>
</dbReference>
<dbReference type="Gene3D" id="1.10.1200.120">
    <property type="entry name" value="Large-conductance mechanosensitive channel, MscL, domain 1"/>
    <property type="match status" value="1"/>
</dbReference>
<dbReference type="HAMAP" id="MF_00115">
    <property type="entry name" value="MscL"/>
    <property type="match status" value="1"/>
</dbReference>
<dbReference type="InterPro" id="IPR019823">
    <property type="entry name" value="Mechanosensitive_channel_CS"/>
</dbReference>
<dbReference type="InterPro" id="IPR001185">
    <property type="entry name" value="MS_channel"/>
</dbReference>
<dbReference type="InterPro" id="IPR037673">
    <property type="entry name" value="MSC/AndL"/>
</dbReference>
<dbReference type="InterPro" id="IPR036019">
    <property type="entry name" value="MscL_channel"/>
</dbReference>
<dbReference type="NCBIfam" id="TIGR00220">
    <property type="entry name" value="mscL"/>
    <property type="match status" value="1"/>
</dbReference>
<dbReference type="NCBIfam" id="NF001843">
    <property type="entry name" value="PRK00567.1-4"/>
    <property type="match status" value="1"/>
</dbReference>
<dbReference type="NCBIfam" id="NF010557">
    <property type="entry name" value="PRK13952.1"/>
    <property type="match status" value="1"/>
</dbReference>
<dbReference type="PANTHER" id="PTHR30266:SF2">
    <property type="entry name" value="LARGE-CONDUCTANCE MECHANOSENSITIVE CHANNEL"/>
    <property type="match status" value="1"/>
</dbReference>
<dbReference type="PANTHER" id="PTHR30266">
    <property type="entry name" value="MECHANOSENSITIVE CHANNEL MSCL"/>
    <property type="match status" value="1"/>
</dbReference>
<dbReference type="Pfam" id="PF01741">
    <property type="entry name" value="MscL"/>
    <property type="match status" value="1"/>
</dbReference>
<dbReference type="PRINTS" id="PR01264">
    <property type="entry name" value="MECHCHANNEL"/>
</dbReference>
<dbReference type="SUPFAM" id="SSF81330">
    <property type="entry name" value="Gated mechanosensitive channel"/>
    <property type="match status" value="1"/>
</dbReference>
<dbReference type="PROSITE" id="PS01327">
    <property type="entry name" value="MSCL"/>
    <property type="match status" value="1"/>
</dbReference>
<accession>A1V513</accession>
<keyword id="KW-0997">Cell inner membrane</keyword>
<keyword id="KW-1003">Cell membrane</keyword>
<keyword id="KW-0407">Ion channel</keyword>
<keyword id="KW-0406">Ion transport</keyword>
<keyword id="KW-0472">Membrane</keyword>
<keyword id="KW-0812">Transmembrane</keyword>
<keyword id="KW-1133">Transmembrane helix</keyword>
<keyword id="KW-0813">Transport</keyword>
<sequence>MSIIKEFKEFAVKGNVMDLAIGVIIGGAFSKIVDSVVKDLIMPVIGVLTGGLDFSNKFVLLGQIPASFKGNPESFKDLQAAGVATFGYGSFITVLINFIILAFIIFLMVKFINKLRKPEEAAPAATPEDVLLLREIRDSLKQR</sequence>
<name>MSCL_BURMS</name>
<organism>
    <name type="scientific">Burkholderia mallei (strain SAVP1)</name>
    <dbReference type="NCBI Taxonomy" id="320388"/>
    <lineage>
        <taxon>Bacteria</taxon>
        <taxon>Pseudomonadati</taxon>
        <taxon>Pseudomonadota</taxon>
        <taxon>Betaproteobacteria</taxon>
        <taxon>Burkholderiales</taxon>
        <taxon>Burkholderiaceae</taxon>
        <taxon>Burkholderia</taxon>
        <taxon>pseudomallei group</taxon>
    </lineage>
</organism>
<protein>
    <recommendedName>
        <fullName evidence="1">Large-conductance mechanosensitive channel</fullName>
    </recommendedName>
</protein>